<protein>
    <recommendedName>
        <fullName>Aerobic glycerol-3-phosphate dehydrogenase</fullName>
        <ecNumber>1.1.5.3</ecNumber>
    </recommendedName>
</protein>
<evidence type="ECO:0000250" key="1"/>
<evidence type="ECO:0000255" key="2"/>
<evidence type="ECO:0000305" key="3"/>
<gene>
    <name type="primary">glpD</name>
    <name type="ordered locus">MW1184</name>
</gene>
<dbReference type="EC" id="1.1.5.3"/>
<dbReference type="EMBL" id="BA000033">
    <property type="protein sequence ID" value="BAB95049.1"/>
    <property type="status" value="ALT_INIT"/>
    <property type="molecule type" value="Genomic_DNA"/>
</dbReference>
<dbReference type="RefSeq" id="WP_001218596.1">
    <property type="nucleotide sequence ID" value="NC_003923.1"/>
</dbReference>
<dbReference type="SMR" id="Q7A105"/>
<dbReference type="KEGG" id="sam:MW1184"/>
<dbReference type="HOGENOM" id="CLU_015740_5_2_9"/>
<dbReference type="UniPathway" id="UPA00618">
    <property type="reaction ID" value="UER00674"/>
</dbReference>
<dbReference type="GO" id="GO:0005737">
    <property type="term" value="C:cytoplasm"/>
    <property type="evidence" value="ECO:0007669"/>
    <property type="project" value="UniProtKB-SubCell"/>
</dbReference>
<dbReference type="GO" id="GO:0004368">
    <property type="term" value="F:glycerol-3-phosphate dehydrogenase (quinone) activity"/>
    <property type="evidence" value="ECO:0007669"/>
    <property type="project" value="UniProtKB-EC"/>
</dbReference>
<dbReference type="GO" id="GO:0019563">
    <property type="term" value="P:glycerol catabolic process"/>
    <property type="evidence" value="ECO:0007669"/>
    <property type="project" value="UniProtKB-UniPathway"/>
</dbReference>
<dbReference type="GO" id="GO:0046168">
    <property type="term" value="P:glycerol-3-phosphate catabolic process"/>
    <property type="evidence" value="ECO:0007669"/>
    <property type="project" value="TreeGrafter"/>
</dbReference>
<dbReference type="Gene3D" id="1.10.8.870">
    <property type="entry name" value="Alpha-glycerophosphate oxidase, cap domain"/>
    <property type="match status" value="1"/>
</dbReference>
<dbReference type="Gene3D" id="3.30.9.10">
    <property type="entry name" value="D-Amino Acid Oxidase, subunit A, domain 2"/>
    <property type="match status" value="1"/>
</dbReference>
<dbReference type="Gene3D" id="3.50.50.60">
    <property type="entry name" value="FAD/NAD(P)-binding domain"/>
    <property type="match status" value="1"/>
</dbReference>
<dbReference type="InterPro" id="IPR031656">
    <property type="entry name" value="DAO_C"/>
</dbReference>
<dbReference type="InterPro" id="IPR038299">
    <property type="entry name" value="DAO_C_sf"/>
</dbReference>
<dbReference type="InterPro" id="IPR006076">
    <property type="entry name" value="FAD-dep_OxRdtase"/>
</dbReference>
<dbReference type="InterPro" id="IPR036188">
    <property type="entry name" value="FAD/NAD-bd_sf"/>
</dbReference>
<dbReference type="InterPro" id="IPR000447">
    <property type="entry name" value="G3P_DH_FAD-dep"/>
</dbReference>
<dbReference type="PANTHER" id="PTHR11985:SF35">
    <property type="entry name" value="ANAEROBIC GLYCEROL-3-PHOSPHATE DEHYDROGENASE SUBUNIT A"/>
    <property type="match status" value="1"/>
</dbReference>
<dbReference type="PANTHER" id="PTHR11985">
    <property type="entry name" value="GLYCEROL-3-PHOSPHATE DEHYDROGENASE"/>
    <property type="match status" value="1"/>
</dbReference>
<dbReference type="Pfam" id="PF01266">
    <property type="entry name" value="DAO"/>
    <property type="match status" value="1"/>
</dbReference>
<dbReference type="Pfam" id="PF16901">
    <property type="entry name" value="DAO_C"/>
    <property type="match status" value="1"/>
</dbReference>
<dbReference type="PRINTS" id="PR01001">
    <property type="entry name" value="FADG3PDH"/>
</dbReference>
<dbReference type="SUPFAM" id="SSF54373">
    <property type="entry name" value="FAD-linked reductases, C-terminal domain"/>
    <property type="match status" value="1"/>
</dbReference>
<dbReference type="SUPFAM" id="SSF51905">
    <property type="entry name" value="FAD/NAD(P)-binding domain"/>
    <property type="match status" value="1"/>
</dbReference>
<dbReference type="PROSITE" id="PS00977">
    <property type="entry name" value="FAD_G3PDH_1"/>
    <property type="match status" value="1"/>
</dbReference>
<dbReference type="PROSITE" id="PS00978">
    <property type="entry name" value="FAD_G3PDH_2"/>
    <property type="match status" value="1"/>
</dbReference>
<feature type="chain" id="PRO_0000270064" description="Aerobic glycerol-3-phosphate dehydrogenase">
    <location>
        <begin position="1"/>
        <end position="557"/>
    </location>
</feature>
<feature type="binding site" evidence="2">
    <location>
        <begin position="21"/>
        <end position="49"/>
    </location>
    <ligand>
        <name>FAD</name>
        <dbReference type="ChEBI" id="CHEBI:57692"/>
    </ligand>
</feature>
<reference key="1">
    <citation type="journal article" date="2002" name="Lancet">
        <title>Genome and virulence determinants of high virulence community-acquired MRSA.</title>
        <authorList>
            <person name="Baba T."/>
            <person name="Takeuchi F."/>
            <person name="Kuroda M."/>
            <person name="Yuzawa H."/>
            <person name="Aoki K."/>
            <person name="Oguchi A."/>
            <person name="Nagai Y."/>
            <person name="Iwama N."/>
            <person name="Asano K."/>
            <person name="Naimi T."/>
            <person name="Kuroda H."/>
            <person name="Cui L."/>
            <person name="Yamamoto K."/>
            <person name="Hiramatsu K."/>
        </authorList>
    </citation>
    <scope>NUCLEOTIDE SEQUENCE [LARGE SCALE GENOMIC DNA]</scope>
    <source>
        <strain>MW2</strain>
    </source>
</reference>
<name>GLPD_STAAW</name>
<organism>
    <name type="scientific">Staphylococcus aureus (strain MW2)</name>
    <dbReference type="NCBI Taxonomy" id="196620"/>
    <lineage>
        <taxon>Bacteria</taxon>
        <taxon>Bacillati</taxon>
        <taxon>Bacillota</taxon>
        <taxon>Bacilli</taxon>
        <taxon>Bacillales</taxon>
        <taxon>Staphylococcaceae</taxon>
        <taxon>Staphylococcus</taxon>
    </lineage>
</organism>
<sequence>MALSTFKREHIKKNLRNDEYDLVIIGGGITGAGIALDASERGMKVALVEMQDFAQGTSSRSTKLVHGGLRYLKQFQIGVVAETGKERAIVYENGPHVTTPEWMLLPMHKGGTFGKFSTSIGLGMYDRLAGVKKSERKKMLSKKETLAKEPLVKKEGLKGGGYYVEYRTDDARLTIEVMKRAAEKGAEIINYTKSEHFTYDKNQQVNGVKVIDKLTNENYTIKAKKVVNAAGPWVDDVRSGDYARNNKKLRLTKGVHVVIDQSKFPLGQAVYFDTEKDGRMIFAIPREGKAYVGTTDTFYDNIKSSPLTTQEDRDYLIDAINYMFPSVNVTDEDIESTWAGIRPLIYEEGKDPSEISRKDEIWEGKSGLLTIAGGKLTGYRHMAQDIVDLVSKRLKKDYGLTFSPCNTKGLAISGGDVGGSKNFDAFVEQKVDVAKGFGIDEDVARRLASKYGSNVDELFNIAQTSQYHDSKLPLEIYVELVYSIQQEMVYKPNDFLVRRSGKMYFNIKDVLDYKDAVIDIMADMLDYSPAQIEAYTEEVEQAIKEAQHGNNQPAVKE</sequence>
<accession>Q7A105</accession>
<comment type="catalytic activity">
    <reaction>
        <text>a quinone + sn-glycerol 3-phosphate = dihydroxyacetone phosphate + a quinol</text>
        <dbReference type="Rhea" id="RHEA:18977"/>
        <dbReference type="ChEBI" id="CHEBI:24646"/>
        <dbReference type="ChEBI" id="CHEBI:57597"/>
        <dbReference type="ChEBI" id="CHEBI:57642"/>
        <dbReference type="ChEBI" id="CHEBI:132124"/>
        <dbReference type="EC" id="1.1.5.3"/>
    </reaction>
</comment>
<comment type="cofactor">
    <cofactor evidence="1">
        <name>FAD</name>
        <dbReference type="ChEBI" id="CHEBI:57692"/>
    </cofactor>
</comment>
<comment type="pathway">
    <text>Polyol metabolism; glycerol degradation via glycerol kinase pathway; glycerone phosphate from sn-glycerol 3-phosphate (aerobic route): step 1/1.</text>
</comment>
<comment type="subcellular location">
    <subcellularLocation>
        <location evidence="1">Cytoplasm</location>
    </subcellularLocation>
</comment>
<comment type="similarity">
    <text evidence="3">Belongs to the FAD-dependent glycerol-3-phosphate dehydrogenase family.</text>
</comment>
<comment type="sequence caution" evidence="3">
    <conflict type="erroneous initiation">
        <sequence resource="EMBL-CDS" id="BAB95049"/>
    </conflict>
</comment>
<keyword id="KW-0963">Cytoplasm</keyword>
<keyword id="KW-0274">FAD</keyword>
<keyword id="KW-0285">Flavoprotein</keyword>
<keyword id="KW-0319">Glycerol metabolism</keyword>
<keyword id="KW-0560">Oxidoreductase</keyword>
<proteinExistence type="inferred from homology"/>